<accession>P34560</accession>
<accession>H2FLF5</accession>
<accession>H2FLF6</accession>
<gene>
    <name type="primary">rmd-1</name>
    <name type="ORF">T05G5.7</name>
</gene>
<name>RMD1_CAEEL</name>
<dbReference type="EMBL" id="Z27079">
    <property type="protein sequence ID" value="CCF23359.1"/>
    <property type="molecule type" value="Genomic_DNA"/>
</dbReference>
<dbReference type="EMBL" id="Z27079">
    <property type="protein sequence ID" value="CCF23360.1"/>
    <property type="molecule type" value="Genomic_DNA"/>
</dbReference>
<dbReference type="PIR" id="S41007">
    <property type="entry name" value="S41007"/>
</dbReference>
<dbReference type="RefSeq" id="NP_001255029.1">
    <molecule id="P34560-1"/>
    <property type="nucleotide sequence ID" value="NM_001268100.3"/>
</dbReference>
<dbReference type="RefSeq" id="NP_001255030.1">
    <molecule id="P34560-2"/>
    <property type="nucleotide sequence ID" value="NM_001268101.3"/>
</dbReference>
<dbReference type="SMR" id="P34560"/>
<dbReference type="BioGRID" id="41574">
    <property type="interactions" value="16"/>
</dbReference>
<dbReference type="FunCoup" id="P34560">
    <property type="interactions" value="322"/>
</dbReference>
<dbReference type="STRING" id="6239.T05G5.7a.2"/>
<dbReference type="PaxDb" id="6239-T05G5.7a"/>
<dbReference type="PeptideAtlas" id="P34560"/>
<dbReference type="EnsemblMetazoa" id="T05G5.7a.1">
    <molecule id="P34560-1"/>
    <property type="protein sequence ID" value="T05G5.7a.1"/>
    <property type="gene ID" value="WBGene00011501"/>
</dbReference>
<dbReference type="EnsemblMetazoa" id="T05G5.7b.1">
    <molecule id="P34560-2"/>
    <property type="protein sequence ID" value="T05G5.7b.1"/>
    <property type="gene ID" value="WBGene00011501"/>
</dbReference>
<dbReference type="GeneID" id="176379"/>
<dbReference type="KEGG" id="cel:CELE_T05G5.7"/>
<dbReference type="AGR" id="WB:WBGene00011501"/>
<dbReference type="CTD" id="176379"/>
<dbReference type="WormBase" id="T05G5.7a">
    <molecule id="P34560-1"/>
    <property type="protein sequence ID" value="CE46837"/>
    <property type="gene ID" value="WBGene00011501"/>
    <property type="gene designation" value="rmd-1"/>
</dbReference>
<dbReference type="WormBase" id="T05G5.7b">
    <molecule id="P34560-2"/>
    <property type="protein sequence ID" value="CE46893"/>
    <property type="gene ID" value="WBGene00011501"/>
    <property type="gene designation" value="rmd-1"/>
</dbReference>
<dbReference type="eggNOG" id="ENOG502QS2U">
    <property type="taxonomic scope" value="Eukaryota"/>
</dbReference>
<dbReference type="GeneTree" id="ENSGT00950000182992"/>
<dbReference type="InParanoid" id="P34560"/>
<dbReference type="OMA" id="HKYYAIF"/>
<dbReference type="OrthoDB" id="512473at2759"/>
<dbReference type="PhylomeDB" id="P34560"/>
<dbReference type="CD-CODE" id="1E117272">
    <property type="entry name" value="Centrosome"/>
</dbReference>
<dbReference type="PRO" id="PR:P34560"/>
<dbReference type="Proteomes" id="UP000001940">
    <property type="component" value="Chromosome III"/>
</dbReference>
<dbReference type="Bgee" id="WBGene00011501">
    <property type="expression patterns" value="Expressed in germ line (C elegans) and 4 other cell types or tissues"/>
</dbReference>
<dbReference type="GO" id="GO:0005737">
    <property type="term" value="C:cytoplasm"/>
    <property type="evidence" value="ECO:0000318"/>
    <property type="project" value="GO_Central"/>
</dbReference>
<dbReference type="GO" id="GO:0005739">
    <property type="term" value="C:mitochondrion"/>
    <property type="evidence" value="ECO:0000318"/>
    <property type="project" value="GO_Central"/>
</dbReference>
<dbReference type="GO" id="GO:0097431">
    <property type="term" value="C:mitotic spindle pole"/>
    <property type="evidence" value="ECO:0000314"/>
    <property type="project" value="WormBase"/>
</dbReference>
<dbReference type="GO" id="GO:0005876">
    <property type="term" value="C:spindle microtubule"/>
    <property type="evidence" value="ECO:0000314"/>
    <property type="project" value="WormBase"/>
</dbReference>
<dbReference type="GO" id="GO:0019900">
    <property type="term" value="F:kinase binding"/>
    <property type="evidence" value="ECO:0000353"/>
    <property type="project" value="UniProtKB"/>
</dbReference>
<dbReference type="GO" id="GO:0008017">
    <property type="term" value="F:microtubule binding"/>
    <property type="evidence" value="ECO:0000318"/>
    <property type="project" value="GO_Central"/>
</dbReference>
<dbReference type="GO" id="GO:0051315">
    <property type="term" value="P:attachment of mitotic spindle microtubules to kinetochore"/>
    <property type="evidence" value="ECO:0000315"/>
    <property type="project" value="UniProtKB"/>
</dbReference>
<dbReference type="GO" id="GO:0051301">
    <property type="term" value="P:cell division"/>
    <property type="evidence" value="ECO:0007669"/>
    <property type="project" value="UniProtKB-KW"/>
</dbReference>
<dbReference type="GO" id="GO:0007052">
    <property type="term" value="P:mitotic spindle organization"/>
    <property type="evidence" value="ECO:0000315"/>
    <property type="project" value="UniProtKB"/>
</dbReference>
<dbReference type="FunFam" id="1.25.40.10:FF:002154">
    <property type="entry name" value="regulator of microtubule dynamics protein 1"/>
    <property type="match status" value="1"/>
</dbReference>
<dbReference type="Gene3D" id="1.25.40.10">
    <property type="entry name" value="Tetratricopeptide repeat domain"/>
    <property type="match status" value="1"/>
</dbReference>
<dbReference type="InterPro" id="IPR049039">
    <property type="entry name" value="RMD1-3_a_helical_rpt"/>
</dbReference>
<dbReference type="InterPro" id="IPR011990">
    <property type="entry name" value="TPR-like_helical_dom_sf"/>
</dbReference>
<dbReference type="PANTHER" id="PTHR16056">
    <property type="entry name" value="REGULATOR OF MICROTUBULE DYNAMICS PROTEIN"/>
    <property type="match status" value="1"/>
</dbReference>
<dbReference type="PANTHER" id="PTHR16056:SF4">
    <property type="entry name" value="REGULATOR OF MICROTUBULE DYNAMICS PROTEIN 1"/>
    <property type="match status" value="1"/>
</dbReference>
<dbReference type="Pfam" id="PF21033">
    <property type="entry name" value="RMD1-3"/>
    <property type="match status" value="1"/>
</dbReference>
<dbReference type="SUPFAM" id="SSF48452">
    <property type="entry name" value="TPR-like"/>
    <property type="match status" value="1"/>
</dbReference>
<organism>
    <name type="scientific">Caenorhabditis elegans</name>
    <dbReference type="NCBI Taxonomy" id="6239"/>
    <lineage>
        <taxon>Eukaryota</taxon>
        <taxon>Metazoa</taxon>
        <taxon>Ecdysozoa</taxon>
        <taxon>Nematoda</taxon>
        <taxon>Chromadorea</taxon>
        <taxon>Rhabditida</taxon>
        <taxon>Rhabditina</taxon>
        <taxon>Rhabditomorpha</taxon>
        <taxon>Rhabditoidea</taxon>
        <taxon>Rhabditidae</taxon>
        <taxon>Peloderinae</taxon>
        <taxon>Caenorhabditis</taxon>
    </lineage>
</organism>
<reference key="1">
    <citation type="journal article" date="1994" name="Nature">
        <title>2.2 Mb of contiguous nucleotide sequence from chromosome III of C. elegans.</title>
        <authorList>
            <person name="Wilson R."/>
            <person name="Ainscough R."/>
            <person name="Anderson K."/>
            <person name="Baynes C."/>
            <person name="Berks M."/>
            <person name="Bonfield J."/>
            <person name="Burton J."/>
            <person name="Connell M."/>
            <person name="Copsey T."/>
            <person name="Cooper J."/>
            <person name="Coulson A."/>
            <person name="Craxton M."/>
            <person name="Dear S."/>
            <person name="Du Z."/>
            <person name="Durbin R."/>
            <person name="Favello A."/>
            <person name="Fraser A."/>
            <person name="Fulton L."/>
            <person name="Gardner A."/>
            <person name="Green P."/>
            <person name="Hawkins T."/>
            <person name="Hillier L."/>
            <person name="Jier M."/>
            <person name="Johnston L."/>
            <person name="Jones M."/>
            <person name="Kershaw J."/>
            <person name="Kirsten J."/>
            <person name="Laisster N."/>
            <person name="Latreille P."/>
            <person name="Lightning J."/>
            <person name="Lloyd C."/>
            <person name="Mortimore B."/>
            <person name="O'Callaghan M."/>
            <person name="Parsons J."/>
            <person name="Percy C."/>
            <person name="Rifken L."/>
            <person name="Roopra A."/>
            <person name="Saunders D."/>
            <person name="Shownkeen R."/>
            <person name="Sims M."/>
            <person name="Smaldon N."/>
            <person name="Smith A."/>
            <person name="Smith M."/>
            <person name="Sonnhammer E."/>
            <person name="Staden R."/>
            <person name="Sulston J."/>
            <person name="Thierry-Mieg J."/>
            <person name="Thomas K."/>
            <person name="Vaudin M."/>
            <person name="Vaughan K."/>
            <person name="Waterston R."/>
            <person name="Watson A."/>
            <person name="Weinstock L."/>
            <person name="Wilkinson-Sproat J."/>
            <person name="Wohldman P."/>
        </authorList>
    </citation>
    <scope>NUCLEOTIDE SEQUENCE [LARGE SCALE GENOMIC DNA]</scope>
    <scope>ALTERNATIVE SPLICING</scope>
    <source>
        <strain>Bristol N2</strain>
    </source>
</reference>
<reference key="2">
    <citation type="journal article" date="1998" name="Science">
        <title>Genome sequence of the nematode C. elegans: a platform for investigating biology.</title>
        <authorList>
            <consortium name="The C. elegans sequencing consortium"/>
        </authorList>
    </citation>
    <scope>NUCLEOTIDE SEQUENCE [LARGE SCALE GENOMIC DNA]</scope>
    <scope>ALTERNATIVE SPLICING</scope>
    <source>
        <strain>Bristol N2</strain>
    </source>
</reference>
<reference key="3">
    <citation type="journal article" date="2007" name="J. Cell Biol.">
        <title>RMD-1, a novel microtubule-associated protein, functions in chromosome segregation in Caenorhabditis elegans.</title>
        <authorList>
            <person name="Oishi K."/>
            <person name="Okano H."/>
            <person name="Sawa H."/>
        </authorList>
    </citation>
    <scope>FUNCTION</scope>
    <scope>INTERACTION WITH AIR-2</scope>
    <scope>SUBCELLULAR LOCATION</scope>
    <scope>DEVELOPMENTAL STAGE</scope>
    <scope>DISRUPTION PHENOTYPE</scope>
</reference>
<evidence type="ECO:0000269" key="1">
    <source>
    </source>
</evidence>
<evidence type="ECO:0000305" key="2"/>
<comment type="function">
    <text evidence="1">Acts in chromosome segregation and organization during mitosis.</text>
</comment>
<comment type="subunit">
    <text evidence="1">Interacts with air-2.</text>
</comment>
<comment type="subcellular location">
    <subcellularLocation>
        <location evidence="1">Cytoplasm</location>
        <location evidence="1">Cytoskeleton</location>
        <location evidence="1">Spindle pole</location>
    </subcellularLocation>
</comment>
<comment type="alternative products">
    <event type="alternative splicing"/>
    <isoform>
        <id>P34560-1</id>
        <name>a</name>
        <sequence type="displayed"/>
    </isoform>
    <isoform>
        <id>P34560-2</id>
        <name>b</name>
        <sequence type="described" ref="VSP_044212"/>
    </isoform>
</comment>
<comment type="developmental stage">
    <text evidence="1">Detected during metaphase and anaphase.</text>
</comment>
<comment type="disruption phenotype">
    <text evidence="1">Defects in cytokinesis, spindle orientation, chromosome segregation, osmotic regulation and merotelic attachments of microtubules to chromosomes.</text>
</comment>
<comment type="similarity">
    <text evidence="2">Belongs to the FAM82/RMD family.</text>
</comment>
<feature type="chain" id="PRO_0000065446" description="Regulator of microtubule dynamics protein 1">
    <location>
        <begin position="1"/>
        <end position="226"/>
    </location>
</feature>
<feature type="splice variant" id="VSP_044212" description="In isoform b." evidence="2">
    <location>
        <begin position="1"/>
        <end position="31"/>
    </location>
</feature>
<sequence length="226" mass="25893">MESFATSDKLFESREFVKGLEELKKRREDGEMTCDLLWRMCRFCHELSTTMSGEQRRKMLIEGRDYGLEAMDLDPSSFLAAKWTAIMFGLVVDQLPTKEKINDGGRLKDMLDKALELDPTDFALLHLRARFSYTIANLSWLERKAASMLYSEVPKATIDDALVDFKAAYNQNADWIENLLFLSKCHLAKKEKQQAREMLNKAIVLPAASSNDAQFVTECKSLLQKC</sequence>
<keyword id="KW-0025">Alternative splicing</keyword>
<keyword id="KW-0131">Cell cycle</keyword>
<keyword id="KW-0132">Cell division</keyword>
<keyword id="KW-0159">Chromosome partition</keyword>
<keyword id="KW-0963">Cytoplasm</keyword>
<keyword id="KW-0206">Cytoskeleton</keyword>
<keyword id="KW-0493">Microtubule</keyword>
<keyword id="KW-0498">Mitosis</keyword>
<keyword id="KW-1185">Reference proteome</keyword>
<protein>
    <recommendedName>
        <fullName>Regulator of microtubule dynamics protein 1</fullName>
    </recommendedName>
</protein>
<proteinExistence type="evidence at protein level"/>